<feature type="chain" id="PRO_1000018772" description="Phosphoribosylaminoimidazole-succinocarboxamide synthase">
    <location>
        <begin position="1"/>
        <end position="236"/>
    </location>
</feature>
<reference key="1">
    <citation type="submission" date="2007-09" db="EMBL/GenBank/DDBJ databases">
        <title>Complete genome sequence of Rickettsia rickettsii.</title>
        <authorList>
            <person name="Madan A."/>
            <person name="Fahey J."/>
            <person name="Helton E."/>
            <person name="Ketteman M."/>
            <person name="Madan A."/>
            <person name="Rodrigues S."/>
            <person name="Sanchez A."/>
            <person name="Dasch G."/>
            <person name="Eremeeva M."/>
        </authorList>
    </citation>
    <scope>NUCLEOTIDE SEQUENCE [LARGE SCALE GENOMIC DNA]</scope>
    <source>
        <strain>Sheila Smith</strain>
    </source>
</reference>
<organism>
    <name type="scientific">Rickettsia rickettsii (strain Sheila Smith)</name>
    <dbReference type="NCBI Taxonomy" id="392021"/>
    <lineage>
        <taxon>Bacteria</taxon>
        <taxon>Pseudomonadati</taxon>
        <taxon>Pseudomonadota</taxon>
        <taxon>Alphaproteobacteria</taxon>
        <taxon>Rickettsiales</taxon>
        <taxon>Rickettsiaceae</taxon>
        <taxon>Rickettsieae</taxon>
        <taxon>Rickettsia</taxon>
        <taxon>spotted fever group</taxon>
    </lineage>
</organism>
<protein>
    <recommendedName>
        <fullName evidence="1">Phosphoribosylaminoimidazole-succinocarboxamide synthase</fullName>
        <ecNumber evidence="1">6.3.2.6</ecNumber>
    </recommendedName>
    <alternativeName>
        <fullName evidence="1">SAICAR synthetase</fullName>
    </alternativeName>
</protein>
<sequence>MKKKLYEGSSKILYSAEEDFLLIMAFSDKAILETGEIVDISGKGVLNNNISSFLMDKLEMIGIENHFIEKINMREQLIQYVEVFPIQVIISSVACSRFVKEFGIDEGYVFDKPIIDFKVRSREFKYPIVNEYQILNFGWLTRDEIKAVKEQALRIYDFLSGLFIGVGIRLVECKLEFGRVFNGEESIIMLTDEISPDNCRLWHINSNEKLGFELLEKEPNKVFESYQLIADRLKEK</sequence>
<gene>
    <name evidence="1" type="primary">purC</name>
    <name type="ordered locus">A1G_01680</name>
</gene>
<keyword id="KW-0067">ATP-binding</keyword>
<keyword id="KW-0436">Ligase</keyword>
<keyword id="KW-0547">Nucleotide-binding</keyword>
<keyword id="KW-0658">Purine biosynthesis</keyword>
<name>PUR7_RICRS</name>
<proteinExistence type="inferred from homology"/>
<dbReference type="EC" id="6.3.2.6" evidence="1"/>
<dbReference type="EMBL" id="CP000848">
    <property type="protein sequence ID" value="ABV75906.1"/>
    <property type="molecule type" value="Genomic_DNA"/>
</dbReference>
<dbReference type="RefSeq" id="WP_004996420.1">
    <property type="nucleotide sequence ID" value="NC_009882.1"/>
</dbReference>
<dbReference type="SMR" id="A8GR81"/>
<dbReference type="GeneID" id="79937074"/>
<dbReference type="KEGG" id="rri:A1G_01680"/>
<dbReference type="HOGENOM" id="CLU_061495_2_0_5"/>
<dbReference type="UniPathway" id="UPA00074">
    <property type="reaction ID" value="UER00131"/>
</dbReference>
<dbReference type="Proteomes" id="UP000006832">
    <property type="component" value="Chromosome"/>
</dbReference>
<dbReference type="GO" id="GO:0005829">
    <property type="term" value="C:cytosol"/>
    <property type="evidence" value="ECO:0007669"/>
    <property type="project" value="TreeGrafter"/>
</dbReference>
<dbReference type="GO" id="GO:0005524">
    <property type="term" value="F:ATP binding"/>
    <property type="evidence" value="ECO:0007669"/>
    <property type="project" value="UniProtKB-KW"/>
</dbReference>
<dbReference type="GO" id="GO:0004639">
    <property type="term" value="F:phosphoribosylaminoimidazolesuccinocarboxamide synthase activity"/>
    <property type="evidence" value="ECO:0007669"/>
    <property type="project" value="UniProtKB-UniRule"/>
</dbReference>
<dbReference type="GO" id="GO:0006189">
    <property type="term" value="P:'de novo' IMP biosynthetic process"/>
    <property type="evidence" value="ECO:0007669"/>
    <property type="project" value="UniProtKB-UniRule"/>
</dbReference>
<dbReference type="GO" id="GO:0009236">
    <property type="term" value="P:cobalamin biosynthetic process"/>
    <property type="evidence" value="ECO:0007669"/>
    <property type="project" value="InterPro"/>
</dbReference>
<dbReference type="CDD" id="cd01415">
    <property type="entry name" value="SAICAR_synt_PurC"/>
    <property type="match status" value="1"/>
</dbReference>
<dbReference type="Gene3D" id="3.30.470.20">
    <property type="entry name" value="ATP-grasp fold, B domain"/>
    <property type="match status" value="1"/>
</dbReference>
<dbReference type="Gene3D" id="3.30.200.20">
    <property type="entry name" value="Phosphorylase Kinase, domain 1"/>
    <property type="match status" value="1"/>
</dbReference>
<dbReference type="HAMAP" id="MF_00137">
    <property type="entry name" value="SAICAR_synth"/>
    <property type="match status" value="1"/>
</dbReference>
<dbReference type="InterPro" id="IPR028923">
    <property type="entry name" value="SAICAR_synt/ADE2_N"/>
</dbReference>
<dbReference type="InterPro" id="IPR033934">
    <property type="entry name" value="SAICAR_synt_PurC"/>
</dbReference>
<dbReference type="InterPro" id="IPR050089">
    <property type="entry name" value="SAICAR_synthetase"/>
</dbReference>
<dbReference type="PANTHER" id="PTHR43599">
    <property type="entry name" value="MULTIFUNCTIONAL PROTEIN ADE2"/>
    <property type="match status" value="1"/>
</dbReference>
<dbReference type="PANTHER" id="PTHR43599:SF3">
    <property type="entry name" value="SI:DKEY-6E2.2"/>
    <property type="match status" value="1"/>
</dbReference>
<dbReference type="Pfam" id="PF01259">
    <property type="entry name" value="SAICAR_synt"/>
    <property type="match status" value="1"/>
</dbReference>
<dbReference type="SUPFAM" id="SSF56104">
    <property type="entry name" value="SAICAR synthase-like"/>
    <property type="match status" value="1"/>
</dbReference>
<accession>A8GR81</accession>
<evidence type="ECO:0000255" key="1">
    <source>
        <dbReference type="HAMAP-Rule" id="MF_00137"/>
    </source>
</evidence>
<comment type="catalytic activity">
    <reaction evidence="1">
        <text>5-amino-1-(5-phospho-D-ribosyl)imidazole-4-carboxylate + L-aspartate + ATP = (2S)-2-[5-amino-1-(5-phospho-beta-D-ribosyl)imidazole-4-carboxamido]succinate + ADP + phosphate + 2 H(+)</text>
        <dbReference type="Rhea" id="RHEA:22628"/>
        <dbReference type="ChEBI" id="CHEBI:15378"/>
        <dbReference type="ChEBI" id="CHEBI:29991"/>
        <dbReference type="ChEBI" id="CHEBI:30616"/>
        <dbReference type="ChEBI" id="CHEBI:43474"/>
        <dbReference type="ChEBI" id="CHEBI:58443"/>
        <dbReference type="ChEBI" id="CHEBI:77657"/>
        <dbReference type="ChEBI" id="CHEBI:456216"/>
        <dbReference type="EC" id="6.3.2.6"/>
    </reaction>
</comment>
<comment type="pathway">
    <text evidence="1">Purine metabolism; IMP biosynthesis via de novo pathway; 5-amino-1-(5-phospho-D-ribosyl)imidazole-4-carboxamide from 5-amino-1-(5-phospho-D-ribosyl)imidazole-4-carboxylate: step 1/2.</text>
</comment>
<comment type="similarity">
    <text evidence="1">Belongs to the SAICAR synthetase family.</text>
</comment>